<evidence type="ECO:0000250" key="1"/>
<evidence type="ECO:0000250" key="2">
    <source>
        <dbReference type="UniProtKB" id="Q27968"/>
    </source>
</evidence>
<evidence type="ECO:0000250" key="3">
    <source>
        <dbReference type="UniProtKB" id="Q91YW3"/>
    </source>
</evidence>
<evidence type="ECO:0000255" key="4"/>
<evidence type="ECO:0000255" key="5">
    <source>
        <dbReference type="PROSITE-ProRule" id="PRU00286"/>
    </source>
</evidence>
<evidence type="ECO:0000256" key="6">
    <source>
        <dbReference type="SAM" id="MobiDB-lite"/>
    </source>
</evidence>
<evidence type="ECO:0000269" key="7">
    <source>
    </source>
</evidence>
<evidence type="ECO:0000269" key="8">
    <source>
    </source>
</evidence>
<evidence type="ECO:0000269" key="9">
    <source>
    </source>
</evidence>
<evidence type="ECO:0000269" key="10">
    <source>
    </source>
</evidence>
<evidence type="ECO:0000269" key="11">
    <source>
    </source>
</evidence>
<evidence type="ECO:0000269" key="12">
    <source>
    </source>
</evidence>
<evidence type="ECO:0000269" key="13">
    <source>
    </source>
</evidence>
<evidence type="ECO:0000269" key="14">
    <source>
    </source>
</evidence>
<evidence type="ECO:0007829" key="15">
    <source>
        <dbReference type="PDB" id="2Y4T"/>
    </source>
</evidence>
<evidence type="ECO:0007829" key="16">
    <source>
        <dbReference type="PDB" id="2Y4U"/>
    </source>
</evidence>
<accession>Q13217</accession>
<accession>Q86WT9</accession>
<accession>Q8N4N2</accession>
<gene>
    <name type="primary">DNAJC3</name>
    <name type="synonym">P58IPK</name>
    <name type="synonym">PRKRI</name>
</gene>
<keyword id="KW-0002">3D-structure</keyword>
<keyword id="KW-0051">Antiviral defense</keyword>
<keyword id="KW-0143">Chaperone</keyword>
<keyword id="KW-0209">Deafness</keyword>
<keyword id="KW-0219">Diabetes mellitus</keyword>
<keyword id="KW-1015">Disulfide bond</keyword>
<keyword id="KW-0256">Endoplasmic reticulum</keyword>
<keyword id="KW-0523">Neurodegeneration</keyword>
<keyword id="KW-0622">Neuropathy</keyword>
<keyword id="KW-0597">Phosphoprotein</keyword>
<keyword id="KW-1267">Proteomics identification</keyword>
<keyword id="KW-1185">Reference proteome</keyword>
<keyword id="KW-0677">Repeat</keyword>
<keyword id="KW-0678">Repressor</keyword>
<keyword id="KW-0732">Signal</keyword>
<keyword id="KW-0346">Stress response</keyword>
<keyword id="KW-0802">TPR repeat</keyword>
<keyword id="KW-0810">Translation regulation</keyword>
<keyword id="KW-0834">Unfolded protein response</keyword>
<comment type="function">
    <text evidence="2 3 7 11 13 14">Involved in the unfolded protein response (UPR) during endoplasmic reticulum (ER) stress. Acts as a negative regulator of the EIF2AK4/GCN2 kinase activity by preventing the phosphorylation of eIF-2-alpha at 'Ser-52' and hence attenuating general protein synthesis under ER stress, hypothermic and amino acid starving stress conditions (By similarity). Co-chaperone of HSPA8/HSC70, it stimulates its ATPase activity. May inhibit both the autophosphorylation of EIF2AK2/PKR and the ability of EIF2AK2 to catalyze phosphorylation of the EIF2A. May inhibit EIF2AK3/PERK activity.</text>
</comment>
<comment type="subunit">
    <text evidence="3 11 13 14">Interacts with EIF2AK4/GCN2; this interaction occurs under endoplasmic reticulum (ER) stress, hypothermic and amino acid starving stress conditions and inhibits EIF2AK4/GCN2 kinase activity. Interacts with EIF2AK3 (By similarity). Interacts with EIF2AK2 (PubMed:8576172). Forms a trimeric complex with DNAJB1 and HSPA8 (PubMed:9920933). Interacts with THAP12 (PubMed:9447982).</text>
</comment>
<comment type="subcellular location">
    <subcellularLocation>
        <location evidence="1">Endoplasmic reticulum</location>
    </subcellularLocation>
</comment>
<comment type="tissue specificity">
    <text evidence="12">Widely expressed with high level in the pancreas and testis. Also expressed in cell lines with different levels.</text>
</comment>
<comment type="induction">
    <text evidence="7 13 14">Up-regulated during an endoplasmic reticulum stress via ATF6. Activated in response to infection by influenza virus through the dissociation of DNAJB1. Down-regulated by DNAJB1 and THAP12.</text>
</comment>
<comment type="domain">
    <text>The J domain mediates interaction with HSPA8.</text>
</comment>
<comment type="domain">
    <text evidence="1">Binding to misfolded proteins is mediated by a hydrophobic patch forming a large groove within the first two TPR repeats.</text>
</comment>
<comment type="disease" evidence="9">
    <disease id="DI-04316">
        <name>Ataxia, combined cerebellar and peripheral, with hearing loss and diabetes mellitus</name>
        <acronym>ACPHD</acronym>
        <description>A disease characterized by juvenile-onset diabetes and neurodegeneration, resulting in ataxia, upper-motor-neuron damage, peripheral neuropathy, hearing loss, and cerebral atrophy.</description>
        <dbReference type="MIM" id="616192"/>
    </disease>
    <text>The disease is caused by variants affecting the gene represented in this entry.</text>
</comment>
<protein>
    <recommendedName>
        <fullName>DnaJ homolog subfamily C member 3</fullName>
    </recommendedName>
    <alternativeName>
        <fullName>Endoplasmic reticulum DNA J domain-containing protein 6</fullName>
        <shortName>ER-resident protein ERdj6</shortName>
        <shortName>ERdj6</shortName>
    </alternativeName>
    <alternativeName>
        <fullName>Interferon-induced, double-stranded RNA-activated protein kinase inhibitor</fullName>
    </alternativeName>
    <alternativeName>
        <fullName>Protein kinase inhibitor of 58 kDa</fullName>
        <shortName>Protein kinase inhibitor p58</shortName>
    </alternativeName>
</protein>
<sequence length="504" mass="57580">MVAPGSVTSRLGSVFPFLLVLVDLQYEGAECGVNADVEKHLELGKKLLAAGQLADALSQFHAAVDGDPDNYIAYYRRATVFLAMGKSKAALPDLTKVIQLKMDFTAARLQRGHLLLKQGKLDEAEDDFKKVLKSNPSENEEKEAQSQLIKSDEMQRLRSQALNAFGSGDYTAAIAFLDKILEVCVWDAELRELRAECFIKEGEPRKAISDLKAASKLKNDNTEAFYKISTLYYQLGDHELSLSEVRECLKLDQDHKRCFAHYKQVKKLNKLIESAEELIRDGRYTDATSKYESVMKTEPSIAEYTVRSKERICHCFSKDEKPVEAIRVCSEVLQMEPDNVNALKDRAEAYLIEEMYDEAIQDYETAQEHNENDQQIREGLEKAQRLLKQSQKRDYYKILGVKRNAKKQEIIKAYRKLALQWHPDNFQNEEEKKKAEKKFIDIAAAKEVLSDPEMRKKFDDGEDPLDAESQQGGGGNPFHRSWNSWQGFNPFSSGGPFRFKFHFN</sequence>
<organism>
    <name type="scientific">Homo sapiens</name>
    <name type="common">Human</name>
    <dbReference type="NCBI Taxonomy" id="9606"/>
    <lineage>
        <taxon>Eukaryota</taxon>
        <taxon>Metazoa</taxon>
        <taxon>Chordata</taxon>
        <taxon>Craniata</taxon>
        <taxon>Vertebrata</taxon>
        <taxon>Euteleostomi</taxon>
        <taxon>Mammalia</taxon>
        <taxon>Eutheria</taxon>
        <taxon>Euarchontoglires</taxon>
        <taxon>Primates</taxon>
        <taxon>Haplorrhini</taxon>
        <taxon>Catarrhini</taxon>
        <taxon>Hominidae</taxon>
        <taxon>Homo</taxon>
    </lineage>
</organism>
<reference key="1">
    <citation type="journal article" date="1996" name="Gene">
        <title>Cloning, expression, and cellular localization of the oncogenic 58-kDa inhibitor of the RNA-activated human and mouse protein kinase.</title>
        <authorList>
            <person name="Korth M.J."/>
            <person name="Lyons C.N."/>
            <person name="Wambach M."/>
            <person name="Katze M.G."/>
        </authorList>
    </citation>
    <scope>NUCLEOTIDE SEQUENCE [MRNA]</scope>
    <scope>TISSUE SPECIFICITY</scope>
</reference>
<reference key="2">
    <citation type="submission" date="2004-10" db="EMBL/GenBank/DDBJ databases">
        <authorList>
            <consortium name="NIEHS SNPs program"/>
        </authorList>
    </citation>
    <scope>NUCLEOTIDE SEQUENCE [GENOMIC DNA]</scope>
</reference>
<reference key="3">
    <citation type="journal article" date="2004" name="Nature">
        <title>The DNA sequence and analysis of human chromosome 13.</title>
        <authorList>
            <person name="Dunham A."/>
            <person name="Matthews L.H."/>
            <person name="Burton J."/>
            <person name="Ashurst J.L."/>
            <person name="Howe K.L."/>
            <person name="Ashcroft K.J."/>
            <person name="Beare D.M."/>
            <person name="Burford D.C."/>
            <person name="Hunt S.E."/>
            <person name="Griffiths-Jones S."/>
            <person name="Jones M.C."/>
            <person name="Keenan S.J."/>
            <person name="Oliver K."/>
            <person name="Scott C.E."/>
            <person name="Ainscough R."/>
            <person name="Almeida J.P."/>
            <person name="Ambrose K.D."/>
            <person name="Andrews D.T."/>
            <person name="Ashwell R.I.S."/>
            <person name="Babbage A.K."/>
            <person name="Bagguley C.L."/>
            <person name="Bailey J."/>
            <person name="Bannerjee R."/>
            <person name="Barlow K.F."/>
            <person name="Bates K."/>
            <person name="Beasley H."/>
            <person name="Bird C.P."/>
            <person name="Bray-Allen S."/>
            <person name="Brown A.J."/>
            <person name="Brown J.Y."/>
            <person name="Burrill W."/>
            <person name="Carder C."/>
            <person name="Carter N.P."/>
            <person name="Chapman J.C."/>
            <person name="Clamp M.E."/>
            <person name="Clark S.Y."/>
            <person name="Clarke G."/>
            <person name="Clee C.M."/>
            <person name="Clegg S.C."/>
            <person name="Cobley V."/>
            <person name="Collins J.E."/>
            <person name="Corby N."/>
            <person name="Coville G.J."/>
            <person name="Deloukas P."/>
            <person name="Dhami P."/>
            <person name="Dunham I."/>
            <person name="Dunn M."/>
            <person name="Earthrowl M.E."/>
            <person name="Ellington A.G."/>
            <person name="Faulkner L."/>
            <person name="Frankish A.G."/>
            <person name="Frankland J."/>
            <person name="French L."/>
            <person name="Garner P."/>
            <person name="Garnett J."/>
            <person name="Gilbert J.G.R."/>
            <person name="Gilson C.J."/>
            <person name="Ghori J."/>
            <person name="Grafham D.V."/>
            <person name="Gribble S.M."/>
            <person name="Griffiths C."/>
            <person name="Hall R.E."/>
            <person name="Hammond S."/>
            <person name="Harley J.L."/>
            <person name="Hart E.A."/>
            <person name="Heath P.D."/>
            <person name="Howden P.J."/>
            <person name="Huckle E.J."/>
            <person name="Hunt P.J."/>
            <person name="Hunt A.R."/>
            <person name="Johnson C."/>
            <person name="Johnson D."/>
            <person name="Kay M."/>
            <person name="Kimberley A.M."/>
            <person name="King A."/>
            <person name="Laird G.K."/>
            <person name="Langford C.J."/>
            <person name="Lawlor S."/>
            <person name="Leongamornlert D.A."/>
            <person name="Lloyd D.M."/>
            <person name="Lloyd C."/>
            <person name="Loveland J.E."/>
            <person name="Lovell J."/>
            <person name="Martin S."/>
            <person name="Mashreghi-Mohammadi M."/>
            <person name="McLaren S.J."/>
            <person name="McMurray A."/>
            <person name="Milne S."/>
            <person name="Moore M.J.F."/>
            <person name="Nickerson T."/>
            <person name="Palmer S.A."/>
            <person name="Pearce A.V."/>
            <person name="Peck A.I."/>
            <person name="Pelan S."/>
            <person name="Phillimore B."/>
            <person name="Porter K.M."/>
            <person name="Rice C.M."/>
            <person name="Searle S."/>
            <person name="Sehra H.K."/>
            <person name="Shownkeen R."/>
            <person name="Skuce C.D."/>
            <person name="Smith M."/>
            <person name="Steward C.A."/>
            <person name="Sycamore N."/>
            <person name="Tester J."/>
            <person name="Thomas D.W."/>
            <person name="Tracey A."/>
            <person name="Tromans A."/>
            <person name="Tubby B."/>
            <person name="Wall M."/>
            <person name="Wallis J.M."/>
            <person name="West A.P."/>
            <person name="Whitehead S.L."/>
            <person name="Willey D.L."/>
            <person name="Wilming L."/>
            <person name="Wray P.W."/>
            <person name="Wright M.W."/>
            <person name="Young L."/>
            <person name="Coulson A."/>
            <person name="Durbin R.M."/>
            <person name="Hubbard T."/>
            <person name="Sulston J.E."/>
            <person name="Beck S."/>
            <person name="Bentley D.R."/>
            <person name="Rogers J."/>
            <person name="Ross M.T."/>
        </authorList>
    </citation>
    <scope>NUCLEOTIDE SEQUENCE [LARGE SCALE GENOMIC DNA]</scope>
</reference>
<reference key="4">
    <citation type="journal article" date="2004" name="Genome Res.">
        <title>The status, quality, and expansion of the NIH full-length cDNA project: the Mammalian Gene Collection (MGC).</title>
        <authorList>
            <consortium name="The MGC Project Team"/>
        </authorList>
    </citation>
    <scope>NUCLEOTIDE SEQUENCE [LARGE SCALE MRNA]</scope>
    <source>
        <tissue>Leukocyte</tissue>
    </source>
</reference>
<reference key="5">
    <citation type="journal article" date="1996" name="J. Biol. Chem.">
        <title>The P58 cellular inhibitor complexes with the interferon-induced, double-stranded RNA-dependent protein kinase, PKR, to regulate its autophosphorylation and activity.</title>
        <authorList>
            <person name="Polyak S.J."/>
            <person name="Tang N."/>
            <person name="Wambach M."/>
            <person name="Barber G.N."/>
            <person name="Katze M.G."/>
        </authorList>
    </citation>
    <scope>FUNCTION</scope>
    <scope>INTERACTION WITH EIF2AK2</scope>
</reference>
<reference key="6">
    <citation type="journal article" date="1998" name="Mol. Cell. Biol.">
        <title>Regulation of interferon-induced protein kinase PKR: modulation of P58IPK inhibitory function by a novel protein, P52rIPK.</title>
        <authorList>
            <person name="Gale M.J. Jr."/>
            <person name="Blakely C.M."/>
            <person name="Hopkins D.A."/>
            <person name="Melville M.W."/>
            <person name="Wambach M."/>
            <person name="Romano P.R."/>
            <person name="Katze M.G."/>
        </authorList>
    </citation>
    <scope>FUNCTION</scope>
    <scope>INTERACTION WITH THAP12</scope>
    <scope>INDUCTION</scope>
</reference>
<reference key="7">
    <citation type="journal article" date="1999" name="J. Biol. Chem.">
        <title>The cellular inhibitor of the PKR protein kinase, P58(IPK), is an influenza virus-activated co-chaperone that modulates heat shock protein 70 activity.</title>
        <authorList>
            <person name="Melville M.W."/>
            <person name="Tan S.-L."/>
            <person name="Wambach M."/>
            <person name="Song J."/>
            <person name="Morimoto R.I."/>
            <person name="Katze M.G."/>
        </authorList>
    </citation>
    <scope>FUNCTION</scope>
    <scope>INTERACTION WITH DNAJB1 AND HSPA8</scope>
    <scope>INDUCTION</scope>
</reference>
<reference key="8">
    <citation type="journal article" date="2003" name="J. Biol. Chem.">
        <title>P58IPK, a novel endoplasmic reticulum stress-inducible protein and potential negative regulator of eIF2alpha signaling.</title>
        <authorList>
            <person name="van Huizen R."/>
            <person name="Martindale J.L."/>
            <person name="Gorospe M."/>
            <person name="Holbrook N.J."/>
        </authorList>
    </citation>
    <scope>FUNCTION</scope>
    <scope>INDUCTION</scope>
</reference>
<reference key="9">
    <citation type="journal article" date="2011" name="BMC Syst. Biol.">
        <title>Initial characterization of the human central proteome.</title>
        <authorList>
            <person name="Burkard T.R."/>
            <person name="Planyavsky M."/>
            <person name="Kaupe I."/>
            <person name="Breitwieser F.P."/>
            <person name="Buerckstuemmer T."/>
            <person name="Bennett K.L."/>
            <person name="Superti-Furga G."/>
            <person name="Colinge J."/>
        </authorList>
    </citation>
    <scope>IDENTIFICATION BY MASS SPECTROMETRY [LARGE SCALE ANALYSIS]</scope>
</reference>
<reference key="10">
    <citation type="journal article" date="2014" name="Am. J. Hum. Genet.">
        <title>Absence of BiP co-chaperone DNAJC3 causes diabetes mellitus and multisystemic neurodegeneration.</title>
        <authorList>
            <person name="Synofzik M."/>
            <person name="Haack T.B."/>
            <person name="Kopajtich R."/>
            <person name="Gorza M."/>
            <person name="Rapaport D."/>
            <person name="Greiner M."/>
            <person name="Schoenfeld C."/>
            <person name="Freiberg C."/>
            <person name="Schorr S."/>
            <person name="Holl R.W."/>
            <person name="Gonzalez M.A."/>
            <person name="Fritsche A."/>
            <person name="Fallier-Becker P."/>
            <person name="Zimmermann R."/>
            <person name="Strom T.M."/>
            <person name="Meitinger T."/>
            <person name="Zuechner S."/>
            <person name="Schuele R."/>
            <person name="Schoels L."/>
            <person name="Prokisch H."/>
        </authorList>
    </citation>
    <scope>INVOLVEMENT IN ACPHD</scope>
</reference>
<reference key="11">
    <citation type="journal article" date="2014" name="J. Proteomics">
        <title>An enzyme assisted RP-RPLC approach for in-depth analysis of human liver phosphoproteome.</title>
        <authorList>
            <person name="Bian Y."/>
            <person name="Song C."/>
            <person name="Cheng K."/>
            <person name="Dong M."/>
            <person name="Wang F."/>
            <person name="Huang J."/>
            <person name="Sun D."/>
            <person name="Wang L."/>
            <person name="Ye M."/>
            <person name="Zou H."/>
        </authorList>
    </citation>
    <scope>IDENTIFICATION BY MASS SPECTROMETRY [LARGE SCALE ANALYSIS]</scope>
    <source>
        <tissue>Liver</tissue>
    </source>
</reference>
<reference key="12">
    <citation type="journal article" date="2015" name="Cell">
        <title>A single kinase generates the majority of the secreted phosphoproteome.</title>
        <authorList>
            <person name="Tagliabracci V.S."/>
            <person name="Wiley S.E."/>
            <person name="Guo X."/>
            <person name="Kinch L.N."/>
            <person name="Durrant E."/>
            <person name="Wen J."/>
            <person name="Xiao J."/>
            <person name="Cui J."/>
            <person name="Nguyen K.B."/>
            <person name="Engel J.L."/>
            <person name="Coon J.J."/>
            <person name="Grishin N."/>
            <person name="Pinna L.A."/>
            <person name="Pagliarini D.J."/>
            <person name="Dixon J.E."/>
        </authorList>
    </citation>
    <scope>PHOSPHORYLATION AT SER-274</scope>
</reference>
<reference key="13">
    <citation type="journal article" date="2015" name="Proteomics">
        <title>N-terminome analysis of the human mitochondrial proteome.</title>
        <authorList>
            <person name="Vaca Jacome A.S."/>
            <person name="Rabilloud T."/>
            <person name="Schaeffer-Reiss C."/>
            <person name="Rompais M."/>
            <person name="Ayoub D."/>
            <person name="Lane L."/>
            <person name="Bairoch A."/>
            <person name="Van Dorsselaer A."/>
            <person name="Carapito C."/>
        </authorList>
    </citation>
    <scope>IDENTIFICATION BY MASS SPECTROMETRY [LARGE SCALE ANALYSIS]</scope>
</reference>
<reference key="14">
    <citation type="journal article" date="2011" name="PLoS ONE">
        <title>The crystal structure of the human co-chaperone P58(IPK).</title>
        <authorList>
            <person name="Svard M."/>
            <person name="Biterova E.I."/>
            <person name="Bourhis J.M."/>
            <person name="Guy J.E."/>
        </authorList>
    </citation>
    <scope>X-RAY CRYSTALLOGRAPHY (3.0 ANGSTROMS) OF 35-461</scope>
    <scope>DISULFIDE BONDS</scope>
</reference>
<name>DNJC3_HUMAN</name>
<feature type="signal peptide" evidence="4">
    <location>
        <begin position="1"/>
        <end position="31"/>
    </location>
</feature>
<feature type="chain" id="PRO_0000071045" description="DnaJ homolog subfamily C member 3">
    <location>
        <begin position="32"/>
        <end position="504"/>
    </location>
</feature>
<feature type="repeat" description="TPR 1">
    <location>
        <begin position="37"/>
        <end position="70"/>
    </location>
</feature>
<feature type="repeat" description="TPR 2">
    <location>
        <begin position="72"/>
        <end position="104"/>
    </location>
</feature>
<feature type="repeat" description="TPR 3">
    <location>
        <begin position="105"/>
        <end position="138"/>
    </location>
</feature>
<feature type="repeat" description="TPR 4">
    <location>
        <begin position="154"/>
        <end position="187"/>
    </location>
</feature>
<feature type="repeat" description="TPR 5">
    <location>
        <begin position="189"/>
        <end position="221"/>
    </location>
</feature>
<feature type="repeat" description="TPR 6">
    <location>
        <begin position="222"/>
        <end position="255"/>
    </location>
</feature>
<feature type="repeat" description="TPR 7">
    <location>
        <begin position="268"/>
        <end position="301"/>
    </location>
</feature>
<feature type="repeat" description="TPR 8">
    <location>
        <begin position="306"/>
        <end position="339"/>
    </location>
</feature>
<feature type="repeat" description="TPR 9">
    <location>
        <begin position="340"/>
        <end position="373"/>
    </location>
</feature>
<feature type="domain" description="J" evidence="5">
    <location>
        <begin position="394"/>
        <end position="462"/>
    </location>
</feature>
<feature type="region of interest" description="Flexible linker">
    <location>
        <begin position="375"/>
        <end position="393"/>
    </location>
</feature>
<feature type="region of interest" description="Disordered" evidence="6">
    <location>
        <begin position="451"/>
        <end position="481"/>
    </location>
</feature>
<feature type="modified residue" description="Phosphoserine; by FAM20C" evidence="10">
    <location>
        <position position="274"/>
    </location>
</feature>
<feature type="disulfide bond" evidence="8">
    <location>
        <begin position="248"/>
        <end position="258"/>
    </location>
</feature>
<feature type="disulfide bond" evidence="8">
    <location>
        <begin position="313"/>
        <end position="329"/>
    </location>
</feature>
<feature type="helix" evidence="15">
    <location>
        <begin position="35"/>
        <end position="49"/>
    </location>
</feature>
<feature type="helix" evidence="15">
    <location>
        <begin position="53"/>
        <end position="66"/>
    </location>
</feature>
<feature type="helix" evidence="15">
    <location>
        <begin position="71"/>
        <end position="83"/>
    </location>
</feature>
<feature type="helix" evidence="15">
    <location>
        <begin position="87"/>
        <end position="100"/>
    </location>
</feature>
<feature type="turn" evidence="16">
    <location>
        <begin position="101"/>
        <end position="103"/>
    </location>
</feature>
<feature type="helix" evidence="15">
    <location>
        <begin position="105"/>
        <end position="117"/>
    </location>
</feature>
<feature type="helix" evidence="15">
    <location>
        <begin position="121"/>
        <end position="132"/>
    </location>
</feature>
<feature type="helix" evidence="15">
    <location>
        <begin position="138"/>
        <end position="167"/>
    </location>
</feature>
<feature type="helix" evidence="15">
    <location>
        <begin position="170"/>
        <end position="183"/>
    </location>
</feature>
<feature type="helix" evidence="15">
    <location>
        <begin position="188"/>
        <end position="200"/>
    </location>
</feature>
<feature type="helix" evidence="15">
    <location>
        <begin position="204"/>
        <end position="207"/>
    </location>
</feature>
<feature type="helix" evidence="15">
    <location>
        <begin position="208"/>
        <end position="218"/>
    </location>
</feature>
<feature type="helix" evidence="15">
    <location>
        <begin position="222"/>
        <end position="234"/>
    </location>
</feature>
<feature type="helix" evidence="15">
    <location>
        <begin position="238"/>
        <end position="251"/>
    </location>
</feature>
<feature type="helix" evidence="15">
    <location>
        <begin position="256"/>
        <end position="281"/>
    </location>
</feature>
<feature type="helix" evidence="15">
    <location>
        <begin position="284"/>
        <end position="297"/>
    </location>
</feature>
<feature type="helix" evidence="15">
    <location>
        <begin position="302"/>
        <end position="317"/>
    </location>
</feature>
<feature type="turn" evidence="15">
    <location>
        <begin position="318"/>
        <end position="320"/>
    </location>
</feature>
<feature type="helix" evidence="15">
    <location>
        <begin position="322"/>
        <end position="335"/>
    </location>
</feature>
<feature type="helix" evidence="15">
    <location>
        <begin position="340"/>
        <end position="352"/>
    </location>
</feature>
<feature type="helix" evidence="15">
    <location>
        <begin position="356"/>
        <end position="367"/>
    </location>
</feature>
<feature type="strand" evidence="15">
    <location>
        <begin position="370"/>
        <end position="372"/>
    </location>
</feature>
<feature type="helix" evidence="15">
    <location>
        <begin position="374"/>
        <end position="391"/>
    </location>
</feature>
<feature type="helix" evidence="15">
    <location>
        <begin position="396"/>
        <end position="398"/>
    </location>
</feature>
<feature type="helix" evidence="15">
    <location>
        <begin position="409"/>
        <end position="420"/>
    </location>
</feature>
<feature type="helix" evidence="15">
    <location>
        <begin position="423"/>
        <end position="425"/>
    </location>
</feature>
<feature type="helix" evidence="15">
    <location>
        <begin position="429"/>
        <end position="448"/>
    </location>
</feature>
<feature type="helix" evidence="15">
    <location>
        <begin position="451"/>
        <end position="454"/>
    </location>
</feature>
<dbReference type="EMBL" id="U28424">
    <property type="protein sequence ID" value="AAC50502.1"/>
    <property type="molecule type" value="mRNA"/>
</dbReference>
<dbReference type="EMBL" id="AY795482">
    <property type="protein sequence ID" value="AAV40838.1"/>
    <property type="molecule type" value="Genomic_DNA"/>
</dbReference>
<dbReference type="EMBL" id="AL138955">
    <property type="status" value="NOT_ANNOTATED_CDS"/>
    <property type="molecule type" value="Genomic_DNA"/>
</dbReference>
<dbReference type="EMBL" id="BC047936">
    <property type="protein sequence ID" value="AAH47936.2"/>
    <property type="molecule type" value="mRNA"/>
</dbReference>
<dbReference type="CCDS" id="CCDS9479.1"/>
<dbReference type="PIR" id="JC4775">
    <property type="entry name" value="JC4775"/>
</dbReference>
<dbReference type="RefSeq" id="NP_006251.1">
    <property type="nucleotide sequence ID" value="NM_006260.5"/>
</dbReference>
<dbReference type="PDB" id="2Y4T">
    <property type="method" value="X-ray"/>
    <property type="resolution" value="3.00 A"/>
    <property type="chains" value="A/B/C=35-461"/>
</dbReference>
<dbReference type="PDB" id="2Y4U">
    <property type="method" value="X-ray"/>
    <property type="resolution" value="3.20 A"/>
    <property type="chains" value="A=35-461"/>
</dbReference>
<dbReference type="PDBsum" id="2Y4T"/>
<dbReference type="PDBsum" id="2Y4U"/>
<dbReference type="SMR" id="Q13217"/>
<dbReference type="BioGRID" id="111597">
    <property type="interactions" value="254"/>
</dbReference>
<dbReference type="CORUM" id="Q13217"/>
<dbReference type="FunCoup" id="Q13217">
    <property type="interactions" value="2297"/>
</dbReference>
<dbReference type="IntAct" id="Q13217">
    <property type="interactions" value="59"/>
</dbReference>
<dbReference type="MINT" id="Q13217"/>
<dbReference type="STRING" id="9606.ENSP00000473631"/>
<dbReference type="GlyGen" id="Q13217">
    <property type="glycosylation" value="2 sites, 2 O-linked glycans (2 sites)"/>
</dbReference>
<dbReference type="iPTMnet" id="Q13217"/>
<dbReference type="MetOSite" id="Q13217"/>
<dbReference type="PhosphoSitePlus" id="Q13217"/>
<dbReference type="SwissPalm" id="Q13217"/>
<dbReference type="BioMuta" id="DNAJC3"/>
<dbReference type="DMDM" id="73620807"/>
<dbReference type="jPOST" id="Q13217"/>
<dbReference type="MassIVE" id="Q13217"/>
<dbReference type="PaxDb" id="9606-ENSP00000473631"/>
<dbReference type="PeptideAtlas" id="Q13217"/>
<dbReference type="ProteomicsDB" id="59230"/>
<dbReference type="Pumba" id="Q13217"/>
<dbReference type="Antibodypedia" id="24863">
    <property type="antibodies" value="164 antibodies from 29 providers"/>
</dbReference>
<dbReference type="DNASU" id="5611"/>
<dbReference type="Ensembl" id="ENST00000602402.6">
    <property type="protein sequence ID" value="ENSP00000473631.1"/>
    <property type="gene ID" value="ENSG00000102580.15"/>
</dbReference>
<dbReference type="GeneID" id="5611"/>
<dbReference type="KEGG" id="hsa:5611"/>
<dbReference type="MANE-Select" id="ENST00000602402.6">
    <property type="protein sequence ID" value="ENSP00000473631.1"/>
    <property type="RefSeq nucleotide sequence ID" value="NM_006260.5"/>
    <property type="RefSeq protein sequence ID" value="NP_006251.1"/>
</dbReference>
<dbReference type="UCSC" id="uc001vmq.3">
    <property type="organism name" value="human"/>
</dbReference>
<dbReference type="AGR" id="HGNC:9439"/>
<dbReference type="CTD" id="5611"/>
<dbReference type="DisGeNET" id="5611"/>
<dbReference type="GeneCards" id="DNAJC3"/>
<dbReference type="HGNC" id="HGNC:9439">
    <property type="gene designation" value="DNAJC3"/>
</dbReference>
<dbReference type="HPA" id="ENSG00000102580">
    <property type="expression patterns" value="Low tissue specificity"/>
</dbReference>
<dbReference type="MalaCards" id="DNAJC3"/>
<dbReference type="MIM" id="601184">
    <property type="type" value="gene"/>
</dbReference>
<dbReference type="MIM" id="616192">
    <property type="type" value="phenotype"/>
</dbReference>
<dbReference type="neXtProt" id="NX_Q13217"/>
<dbReference type="OpenTargets" id="ENSG00000102580"/>
<dbReference type="Orphanet" id="445062">
    <property type="disease" value="Juvenile-onset diabetes mellitus-central and peripheral neurodegeneration syndrome"/>
</dbReference>
<dbReference type="PharmGKB" id="PA27420"/>
<dbReference type="VEuPathDB" id="HostDB:ENSG00000102580"/>
<dbReference type="eggNOG" id="KOG0624">
    <property type="taxonomic scope" value="Eukaryota"/>
</dbReference>
<dbReference type="GeneTree" id="ENSGT00940000159806"/>
<dbReference type="InParanoid" id="Q13217"/>
<dbReference type="OMA" id="PFAHFQH"/>
<dbReference type="OrthoDB" id="1726119at2759"/>
<dbReference type="PAN-GO" id="Q13217">
    <property type="GO annotations" value="4 GO annotations based on evolutionary models"/>
</dbReference>
<dbReference type="PhylomeDB" id="Q13217"/>
<dbReference type="TreeFam" id="TF105162"/>
<dbReference type="PathwayCommons" id="Q13217"/>
<dbReference type="Reactome" id="R-HSA-192823">
    <property type="pathway name" value="Viral mRNA Translation"/>
</dbReference>
<dbReference type="Reactome" id="R-HSA-381038">
    <property type="pathway name" value="XBP1(S) activates chaperone genes"/>
</dbReference>
<dbReference type="Reactome" id="R-HSA-381426">
    <property type="pathway name" value="Regulation of Insulin-like Growth Factor (IGF) transport and uptake by Insulin-like Growth Factor Binding Proteins (IGFBPs)"/>
</dbReference>
<dbReference type="Reactome" id="R-HSA-6798695">
    <property type="pathway name" value="Neutrophil degranulation"/>
</dbReference>
<dbReference type="Reactome" id="R-HSA-8957275">
    <property type="pathway name" value="Post-translational protein phosphorylation"/>
</dbReference>
<dbReference type="Reactome" id="R-HSA-9833482">
    <property type="pathway name" value="PKR-mediated signaling"/>
</dbReference>
<dbReference type="SignaLink" id="Q13217"/>
<dbReference type="SIGNOR" id="Q13217"/>
<dbReference type="BioGRID-ORCS" id="5611">
    <property type="hits" value="17 hits in 1163 CRISPR screens"/>
</dbReference>
<dbReference type="ChiTaRS" id="DNAJC3">
    <property type="organism name" value="human"/>
</dbReference>
<dbReference type="EvolutionaryTrace" id="Q13217"/>
<dbReference type="GeneWiki" id="DNAJC3"/>
<dbReference type="GenomeRNAi" id="5611"/>
<dbReference type="Pharos" id="Q13217">
    <property type="development level" value="Tbio"/>
</dbReference>
<dbReference type="PRO" id="PR:Q13217"/>
<dbReference type="Proteomes" id="UP000005640">
    <property type="component" value="Chromosome 13"/>
</dbReference>
<dbReference type="RNAct" id="Q13217">
    <property type="molecule type" value="protein"/>
</dbReference>
<dbReference type="Bgee" id="ENSG00000102580">
    <property type="expression patterns" value="Expressed in corpus epididymis and 192 other cell types or tissues"/>
</dbReference>
<dbReference type="ExpressionAtlas" id="Q13217">
    <property type="expression patterns" value="baseline and differential"/>
</dbReference>
<dbReference type="GO" id="GO:0035578">
    <property type="term" value="C:azurophil granule lumen"/>
    <property type="evidence" value="ECO:0000304"/>
    <property type="project" value="Reactome"/>
</dbReference>
<dbReference type="GO" id="GO:0005737">
    <property type="term" value="C:cytoplasm"/>
    <property type="evidence" value="ECO:0000304"/>
    <property type="project" value="ProtInc"/>
</dbReference>
<dbReference type="GO" id="GO:0005829">
    <property type="term" value="C:cytosol"/>
    <property type="evidence" value="ECO:0000250"/>
    <property type="project" value="UniProtKB"/>
</dbReference>
<dbReference type="GO" id="GO:0005783">
    <property type="term" value="C:endoplasmic reticulum"/>
    <property type="evidence" value="ECO:0000250"/>
    <property type="project" value="UniProtKB"/>
</dbReference>
<dbReference type="GO" id="GO:0005788">
    <property type="term" value="C:endoplasmic reticulum lumen"/>
    <property type="evidence" value="ECO:0000304"/>
    <property type="project" value="Reactome"/>
</dbReference>
<dbReference type="GO" id="GO:0070062">
    <property type="term" value="C:extracellular exosome"/>
    <property type="evidence" value="ECO:0007005"/>
    <property type="project" value="UniProtKB"/>
</dbReference>
<dbReference type="GO" id="GO:0005576">
    <property type="term" value="C:extracellular region"/>
    <property type="evidence" value="ECO:0000304"/>
    <property type="project" value="Reactome"/>
</dbReference>
<dbReference type="GO" id="GO:1903561">
    <property type="term" value="C:extracellular vesicle"/>
    <property type="evidence" value="ECO:0007005"/>
    <property type="project" value="UniProtKB"/>
</dbReference>
<dbReference type="GO" id="GO:0016020">
    <property type="term" value="C:membrane"/>
    <property type="evidence" value="ECO:0007005"/>
    <property type="project" value="UniProtKB"/>
</dbReference>
<dbReference type="GO" id="GO:0051787">
    <property type="term" value="F:misfolded protein binding"/>
    <property type="evidence" value="ECO:0000318"/>
    <property type="project" value="GO_Central"/>
</dbReference>
<dbReference type="GO" id="GO:0019901">
    <property type="term" value="F:protein kinase binding"/>
    <property type="evidence" value="ECO:0000250"/>
    <property type="project" value="UniProtKB"/>
</dbReference>
<dbReference type="GO" id="GO:0004860">
    <property type="term" value="F:protein kinase inhibitor activity"/>
    <property type="evidence" value="ECO:0000250"/>
    <property type="project" value="UniProtKB"/>
</dbReference>
<dbReference type="GO" id="GO:0051087">
    <property type="term" value="F:protein-folding chaperone binding"/>
    <property type="evidence" value="ECO:0000318"/>
    <property type="project" value="GO_Central"/>
</dbReference>
<dbReference type="GO" id="GO:0070417">
    <property type="term" value="P:cellular response to cold"/>
    <property type="evidence" value="ECO:0000250"/>
    <property type="project" value="UniProtKB"/>
</dbReference>
<dbReference type="GO" id="GO:0051607">
    <property type="term" value="P:defense response to virus"/>
    <property type="evidence" value="ECO:0007669"/>
    <property type="project" value="UniProtKB-KW"/>
</dbReference>
<dbReference type="GO" id="GO:0043066">
    <property type="term" value="P:negative regulation of apoptotic process"/>
    <property type="evidence" value="ECO:0000315"/>
    <property type="project" value="ParkinsonsUK-UCL"/>
</dbReference>
<dbReference type="GO" id="GO:1903912">
    <property type="term" value="P:negative regulation of endoplasmic reticulum stress-induced eIF2 alpha phosphorylation"/>
    <property type="evidence" value="ECO:0000250"/>
    <property type="project" value="UniProtKB"/>
</dbReference>
<dbReference type="GO" id="GO:1902010">
    <property type="term" value="P:negative regulation of translation in response to endoplasmic reticulum stress"/>
    <property type="evidence" value="ECO:0000315"/>
    <property type="project" value="ParkinsonsUK-UCL"/>
</dbReference>
<dbReference type="GO" id="GO:0036494">
    <property type="term" value="P:positive regulation of translation initiation in response to endoplasmic reticulum stress"/>
    <property type="evidence" value="ECO:0000250"/>
    <property type="project" value="UniProtKB"/>
</dbReference>
<dbReference type="GO" id="GO:0034975">
    <property type="term" value="P:protein folding in endoplasmic reticulum"/>
    <property type="evidence" value="ECO:0000318"/>
    <property type="project" value="GO_Central"/>
</dbReference>
<dbReference type="GO" id="GO:0051603">
    <property type="term" value="P:proteolysis involved in protein catabolic process"/>
    <property type="evidence" value="ECO:0007669"/>
    <property type="project" value="Ensembl"/>
</dbReference>
<dbReference type="GO" id="GO:0006986">
    <property type="term" value="P:response to unfolded protein"/>
    <property type="evidence" value="ECO:0007669"/>
    <property type="project" value="UniProtKB-KW"/>
</dbReference>
<dbReference type="CDD" id="cd06257">
    <property type="entry name" value="DnaJ"/>
    <property type="match status" value="1"/>
</dbReference>
<dbReference type="FunFam" id="1.25.40.10:FF:000122">
    <property type="entry name" value="DnaJ (Hsp40) homolog, subfamily C, member 3"/>
    <property type="match status" value="1"/>
</dbReference>
<dbReference type="FunFam" id="1.10.287.110:FF:000015">
    <property type="entry name" value="dnaJ homolog subfamily C member 3"/>
    <property type="match status" value="1"/>
</dbReference>
<dbReference type="Gene3D" id="1.10.287.110">
    <property type="entry name" value="DnaJ domain"/>
    <property type="match status" value="1"/>
</dbReference>
<dbReference type="Gene3D" id="1.25.40.10">
    <property type="entry name" value="Tetratricopeptide repeat domain"/>
    <property type="match status" value="1"/>
</dbReference>
<dbReference type="InterPro" id="IPR051727">
    <property type="entry name" value="DnaJ_C3_Co-chaperones"/>
</dbReference>
<dbReference type="InterPro" id="IPR001623">
    <property type="entry name" value="DnaJ_domain"/>
</dbReference>
<dbReference type="InterPro" id="IPR036869">
    <property type="entry name" value="J_dom_sf"/>
</dbReference>
<dbReference type="InterPro" id="IPR011990">
    <property type="entry name" value="TPR-like_helical_dom_sf"/>
</dbReference>
<dbReference type="InterPro" id="IPR019734">
    <property type="entry name" value="TPR_rpt"/>
</dbReference>
<dbReference type="PANTHER" id="PTHR44140:SF3">
    <property type="entry name" value="DNAJ HOMOLOG SUBFAMILY C MEMBER 3"/>
    <property type="match status" value="1"/>
</dbReference>
<dbReference type="PANTHER" id="PTHR44140">
    <property type="entry name" value="LD25575P"/>
    <property type="match status" value="1"/>
</dbReference>
<dbReference type="Pfam" id="PF00226">
    <property type="entry name" value="DnaJ"/>
    <property type="match status" value="1"/>
</dbReference>
<dbReference type="Pfam" id="PF00515">
    <property type="entry name" value="TPR_1"/>
    <property type="match status" value="1"/>
</dbReference>
<dbReference type="Pfam" id="PF13432">
    <property type="entry name" value="TPR_16"/>
    <property type="match status" value="1"/>
</dbReference>
<dbReference type="Pfam" id="PF14559">
    <property type="entry name" value="TPR_19"/>
    <property type="match status" value="1"/>
</dbReference>
<dbReference type="Pfam" id="PF13181">
    <property type="entry name" value="TPR_8"/>
    <property type="match status" value="1"/>
</dbReference>
<dbReference type="PRINTS" id="PR00625">
    <property type="entry name" value="JDOMAIN"/>
</dbReference>
<dbReference type="SMART" id="SM00271">
    <property type="entry name" value="DnaJ"/>
    <property type="match status" value="1"/>
</dbReference>
<dbReference type="SMART" id="SM00028">
    <property type="entry name" value="TPR"/>
    <property type="match status" value="7"/>
</dbReference>
<dbReference type="SUPFAM" id="SSF46565">
    <property type="entry name" value="Chaperone J-domain"/>
    <property type="match status" value="1"/>
</dbReference>
<dbReference type="SUPFAM" id="SSF48452">
    <property type="entry name" value="TPR-like"/>
    <property type="match status" value="1"/>
</dbReference>
<dbReference type="PROSITE" id="PS50076">
    <property type="entry name" value="DNAJ_2"/>
    <property type="match status" value="1"/>
</dbReference>
<dbReference type="PROSITE" id="PS50005">
    <property type="entry name" value="TPR"/>
    <property type="match status" value="8"/>
</dbReference>
<dbReference type="PROSITE" id="PS50293">
    <property type="entry name" value="TPR_REGION"/>
    <property type="match status" value="1"/>
</dbReference>
<proteinExistence type="evidence at protein level"/>